<evidence type="ECO:0000255" key="1">
    <source>
        <dbReference type="HAMAP-Rule" id="MF_01357"/>
    </source>
</evidence>
<evidence type="ECO:0000269" key="2">
    <source>
    </source>
</evidence>
<evidence type="ECO:0000269" key="3">
    <source>
    </source>
</evidence>
<dbReference type="EC" id="7.1.1.-" evidence="1"/>
<dbReference type="EMBL" id="AB086179">
    <property type="protein sequence ID" value="BAC55352.1"/>
    <property type="molecule type" value="Genomic_DNA"/>
</dbReference>
<dbReference type="EMBL" id="AB087444">
    <property type="protein sequence ID" value="BAC55445.1"/>
    <property type="molecule type" value="mRNA"/>
</dbReference>
<dbReference type="EMBL" id="AB087445">
    <property type="protein sequence ID" value="BAC55446.1"/>
    <property type="molecule type" value="mRNA"/>
</dbReference>
<dbReference type="RefSeq" id="NP_777416.2">
    <property type="nucleotide sequence ID" value="NC_004543.1"/>
</dbReference>
<dbReference type="SMR" id="Q85BB2"/>
<dbReference type="GeneID" id="2553503"/>
<dbReference type="GO" id="GO:0009535">
    <property type="term" value="C:chloroplast thylakoid membrane"/>
    <property type="evidence" value="ECO:0007669"/>
    <property type="project" value="UniProtKB-SubCell"/>
</dbReference>
<dbReference type="GO" id="GO:0008137">
    <property type="term" value="F:NADH dehydrogenase (ubiquinone) activity"/>
    <property type="evidence" value="ECO:0007669"/>
    <property type="project" value="InterPro"/>
</dbReference>
<dbReference type="GO" id="GO:0048038">
    <property type="term" value="F:quinone binding"/>
    <property type="evidence" value="ECO:0007669"/>
    <property type="project" value="UniProtKB-KW"/>
</dbReference>
<dbReference type="GO" id="GO:0019684">
    <property type="term" value="P:photosynthesis, light reaction"/>
    <property type="evidence" value="ECO:0007669"/>
    <property type="project" value="UniProtKB-UniRule"/>
</dbReference>
<dbReference type="Gene3D" id="3.30.460.80">
    <property type="entry name" value="NADH:ubiquinone oxidoreductase, 30kDa subunit"/>
    <property type="match status" value="1"/>
</dbReference>
<dbReference type="HAMAP" id="MF_01357">
    <property type="entry name" value="NDH1_NuoC"/>
    <property type="match status" value="1"/>
</dbReference>
<dbReference type="InterPro" id="IPR010218">
    <property type="entry name" value="NADH_DH_suC"/>
</dbReference>
<dbReference type="InterPro" id="IPR037232">
    <property type="entry name" value="NADH_quin_OxRdtase_su_C/D-like"/>
</dbReference>
<dbReference type="InterPro" id="IPR001268">
    <property type="entry name" value="NADH_UbQ_OxRdtase_30kDa_su"/>
</dbReference>
<dbReference type="InterPro" id="IPR020396">
    <property type="entry name" value="NADH_UbQ_OxRdtase_CS"/>
</dbReference>
<dbReference type="NCBIfam" id="NF009141">
    <property type="entry name" value="PRK12494.1"/>
    <property type="match status" value="1"/>
</dbReference>
<dbReference type="PANTHER" id="PTHR10884:SF14">
    <property type="entry name" value="NADH DEHYDROGENASE [UBIQUINONE] IRON-SULFUR PROTEIN 3, MITOCHONDRIAL"/>
    <property type="match status" value="1"/>
</dbReference>
<dbReference type="PANTHER" id="PTHR10884">
    <property type="entry name" value="NADH DEHYDROGENASE UBIQUINONE IRON-SULFUR PROTEIN 3"/>
    <property type="match status" value="1"/>
</dbReference>
<dbReference type="Pfam" id="PF00329">
    <property type="entry name" value="Complex1_30kDa"/>
    <property type="match status" value="1"/>
</dbReference>
<dbReference type="SUPFAM" id="SSF143243">
    <property type="entry name" value="Nqo5-like"/>
    <property type="match status" value="1"/>
</dbReference>
<dbReference type="PROSITE" id="PS00542">
    <property type="entry name" value="COMPLEX1_30K"/>
    <property type="match status" value="1"/>
</dbReference>
<organism>
    <name type="scientific">Anthoceros angustus</name>
    <name type="common">Hornwort</name>
    <name type="synonym">Anthoceros formosae</name>
    <dbReference type="NCBI Taxonomy" id="48387"/>
    <lineage>
        <taxon>Eukaryota</taxon>
        <taxon>Viridiplantae</taxon>
        <taxon>Streptophyta</taxon>
        <taxon>Embryophyta</taxon>
        <taxon>Anthocerotophyta</taxon>
        <taxon>Anthocerotopsida</taxon>
        <taxon>Anthocerotidae</taxon>
        <taxon>Anthocerotales</taxon>
        <taxon>Anthocerotaceae</taxon>
        <taxon>Anthoceros</taxon>
    </lineage>
</organism>
<proteinExistence type="evidence at transcript level"/>
<accession>Q85BB2</accession>
<accession>Q85UU3</accession>
<comment type="function">
    <text evidence="1">NDH shuttles electrons from NAD(P)H:plastoquinone, via FMN and iron-sulfur (Fe-S) centers, to quinones in the photosynthetic chain and possibly in a chloroplast respiratory chain. The immediate electron acceptor for the enzyme in this species is believed to be plastoquinone. Couples the redox reaction to proton translocation, and thus conserves the redox energy in a proton gradient.</text>
</comment>
<comment type="catalytic activity">
    <reaction evidence="1">
        <text>a plastoquinone + NADH + (n+1) H(+)(in) = a plastoquinol + NAD(+) + n H(+)(out)</text>
        <dbReference type="Rhea" id="RHEA:42608"/>
        <dbReference type="Rhea" id="RHEA-COMP:9561"/>
        <dbReference type="Rhea" id="RHEA-COMP:9562"/>
        <dbReference type="ChEBI" id="CHEBI:15378"/>
        <dbReference type="ChEBI" id="CHEBI:17757"/>
        <dbReference type="ChEBI" id="CHEBI:57540"/>
        <dbReference type="ChEBI" id="CHEBI:57945"/>
        <dbReference type="ChEBI" id="CHEBI:62192"/>
    </reaction>
</comment>
<comment type="catalytic activity">
    <reaction evidence="1">
        <text>a plastoquinone + NADPH + (n+1) H(+)(in) = a plastoquinol + NADP(+) + n H(+)(out)</text>
        <dbReference type="Rhea" id="RHEA:42612"/>
        <dbReference type="Rhea" id="RHEA-COMP:9561"/>
        <dbReference type="Rhea" id="RHEA-COMP:9562"/>
        <dbReference type="ChEBI" id="CHEBI:15378"/>
        <dbReference type="ChEBI" id="CHEBI:17757"/>
        <dbReference type="ChEBI" id="CHEBI:57783"/>
        <dbReference type="ChEBI" id="CHEBI:58349"/>
        <dbReference type="ChEBI" id="CHEBI:62192"/>
    </reaction>
</comment>
<comment type="subunit">
    <text evidence="1">NDH is composed of at least 16 different subunits, 5 of which are encoded in the nucleus.</text>
</comment>
<comment type="subcellular location">
    <subcellularLocation>
        <location evidence="1">Plastid</location>
        <location evidence="1">Chloroplast thylakoid membrane</location>
        <topology evidence="1">Peripheral membrane protein</topology>
        <orientation evidence="1">Stromal side</orientation>
    </subcellularLocation>
</comment>
<comment type="RNA editing">
    <location>
        <position position="20" evidence="2 3"/>
    </location>
    <location>
        <position position="59" evidence="2 3"/>
    </location>
    <location>
        <position position="64" evidence="2 3"/>
    </location>
    <location>
        <position position="72" evidence="2 3"/>
    </location>
    <location>
        <position position="82" evidence="2 3"/>
    </location>
    <location>
        <position position="110" evidence="2 3"/>
    </location>
</comment>
<comment type="similarity">
    <text evidence="1">Belongs to the complex I 30 kDa subunit family.</text>
</comment>
<feature type="chain" id="PRO_0000118651" description="NAD(P)H-quinone oxidoreductase subunit J, chloroplastic">
    <location>
        <begin position="1"/>
        <end position="169"/>
    </location>
</feature>
<keyword id="KW-0150">Chloroplast</keyword>
<keyword id="KW-0472">Membrane</keyword>
<keyword id="KW-0520">NAD</keyword>
<keyword id="KW-0521">NADP</keyword>
<keyword id="KW-0934">Plastid</keyword>
<keyword id="KW-0618">Plastoquinone</keyword>
<keyword id="KW-0874">Quinone</keyword>
<keyword id="KW-0691">RNA editing</keyword>
<keyword id="KW-0793">Thylakoid</keyword>
<keyword id="KW-1278">Translocase</keyword>
<keyword id="KW-0813">Transport</keyword>
<gene>
    <name evidence="1" type="primary">ndhJ</name>
</gene>
<sequence>MLETFTNDTNEIQGRLSAWLIKHRLAHRPLGFDYQGVETLQVRSEDWLSIAVALYAYGFNYLRSQCVYDVAPGGLLASVYHLTKVQSNADQPEEVCIKIFVSRKNPKIPSVFWVWKGADFQERESYDMLGISYESHPRLKRILMPDSWIGWPLRKDYIVPNFYELQDAY</sequence>
<geneLocation type="chloroplast"/>
<protein>
    <recommendedName>
        <fullName evidence="1">NAD(P)H-quinone oxidoreductase subunit J, chloroplastic</fullName>
        <ecNumber evidence="1">7.1.1.-</ecNumber>
    </recommendedName>
    <alternativeName>
        <fullName>NAD(P)H dehydrogenase subunit J</fullName>
    </alternativeName>
    <alternativeName>
        <fullName evidence="1">NADH-plastoquinone oxidoreductase subunit J</fullName>
    </alternativeName>
</protein>
<reference key="1">
    <citation type="journal article" date="2003" name="Nucleic Acids Res.">
        <title>The complete nucleotide sequence of the hornwort (Anthoceros formosae) chloroplast genome: insight into the earliest land plants.</title>
        <authorList>
            <person name="Kugita M."/>
            <person name="Kaneko A."/>
            <person name="Yamamoto Y."/>
            <person name="Takeya Y."/>
            <person name="Matsumoto T."/>
            <person name="Yoshinaga K."/>
        </authorList>
    </citation>
    <scope>NUCLEOTIDE SEQUENCE [LARGE SCALE GENOMIC DNA]</scope>
    <scope>RNA EDITING</scope>
</reference>
<reference key="2">
    <citation type="journal article" date="2003" name="Nucleic Acids Res.">
        <title>RNA editing in hornwort chloroplasts makes more than half the genes functional.</title>
        <authorList>
            <person name="Kugita M."/>
            <person name="Yamamoto Y."/>
            <person name="Fujikawa T."/>
            <person name="Matsumoto T."/>
            <person name="Yoshinaga K."/>
        </authorList>
    </citation>
    <scope>NUCLEOTIDE SEQUENCE [MRNA]</scope>
    <scope>RNA EDITING</scope>
    <source>
        <tissue>Thallus</tissue>
    </source>
</reference>
<name>NDHJ_ANTAG</name>